<gene>
    <name evidence="1" type="primary">rpoB</name>
    <name type="ordered locus">lhv_0302</name>
</gene>
<evidence type="ECO:0000255" key="1">
    <source>
        <dbReference type="HAMAP-Rule" id="MF_01321"/>
    </source>
</evidence>
<evidence type="ECO:0000256" key="2">
    <source>
        <dbReference type="SAM" id="MobiDB-lite"/>
    </source>
</evidence>
<keyword id="KW-0240">DNA-directed RNA polymerase</keyword>
<keyword id="KW-0548">Nucleotidyltransferase</keyword>
<keyword id="KW-0804">Transcription</keyword>
<keyword id="KW-0808">Transferase</keyword>
<comment type="function">
    <text evidence="1">DNA-dependent RNA polymerase catalyzes the transcription of DNA into RNA using the four ribonucleoside triphosphates as substrates.</text>
</comment>
<comment type="catalytic activity">
    <reaction evidence="1">
        <text>RNA(n) + a ribonucleoside 5'-triphosphate = RNA(n+1) + diphosphate</text>
        <dbReference type="Rhea" id="RHEA:21248"/>
        <dbReference type="Rhea" id="RHEA-COMP:14527"/>
        <dbReference type="Rhea" id="RHEA-COMP:17342"/>
        <dbReference type="ChEBI" id="CHEBI:33019"/>
        <dbReference type="ChEBI" id="CHEBI:61557"/>
        <dbReference type="ChEBI" id="CHEBI:140395"/>
        <dbReference type="EC" id="2.7.7.6"/>
    </reaction>
</comment>
<comment type="subunit">
    <text evidence="1">The RNAP catalytic core consists of 2 alpha, 1 beta, 1 beta' and 1 omega subunit. When a sigma factor is associated with the core the holoenzyme is formed, which can initiate transcription.</text>
</comment>
<comment type="similarity">
    <text evidence="1">Belongs to the RNA polymerase beta chain family.</text>
</comment>
<sequence>MLNGHVVNYGKHRTRRSFSRIKEVLKLPNLTDVQTESYKWFLDKGIKEVFDDIMPISDFSGKLSLEYEGYKLQKPKYTVDEARDHDATYAAPMRVTLKLTNQETGEIKTQDVFFGDLPLMTESGSFIVNGAERVIVSQLVRSPGVYYTGDYDKNGRQIFGTTVIPNRGAWLEYETDAKNVSFVRVDRTRKLPLTVLIRAMGIGSDSDIIDMFGQSDTLQFTLDKDVHKNPADSRVAEAIKDIYERLRPGEPKTTDSSRSLLYARFFDPRRYDLAPVGRYKINKKLSLKNRLYGQTLAETLADPDTGEIIAKKDTVVTHEVMDKLAPYLDRDDFKMVTYQPSKEGVLPDPITVQEIKVYSKVDPEREVKLMSNGHIAEDVKHLTPADVLASINYFFALQDKIGTTDDIDHLGNRRIRRVGELLQNQFRIGLARMERVVRERMSIQDPLTVTPQQLINIRPIVASIKEFFGSSQLSQFMDQHNPLGELTHKRRMSALGPGGLTRDRAGYEVRDVHYTHYGRLCPIETPEGPNIGLINSLASYAIINKYGFIETPYRRVSWKTHKVTDKIDYLTADEEDNYIIAGANTPLNDDGSFKSDVILARQKEDNVEVTPDKIDYMDVIPKQVVSVASACIPFLENDDSNRALMGANQQRQAEPLINPHGSLVGTGMEYRAAHDSGAALIAKAAGTVEYVDANEIRIRREDGTLDKYTLEKYRRSNNSKSYNQTPNVKLGDHVDVSDVIANGPTMDHGELALGQNPLIAFMTWNMYNYEDAIMLSERLVKDDVYTSISIEDYESEARDTKLGPEEITRELPNIGEDALKDLDADGIVRVGAEVHDGDILVGKVTPKGVTELSAEERLLHAIFGEKAHEVRDTSLRVPHGGGGIVQDVKVYTREAGDELSPGVNTMVRVYIAQKRKIQVGDKMSGRHGNKGTVAAVVPEEDMPYLPDGTPVDICLNPMGVPSRMNIGQLLELHLGAAARQLGIHVATPVFAGANENDVWDTVRQAGIDKDGKTVIYDGRTGEPFHNRVSVGVMHYLKLTHMVDDKIHARSIGPYSLVTQQPLGGKAQFGGQRFGEMEVWALEAYGAAYTLQEILTYKSDDVVGRVKAYEAIVKGERIPKPGVPESFRVLVKELQSLGLDIRVLDMNHNEIELRDMDEDSSEHLNIDSLSRMAEEQEKKKLAEETGKSGDKKENKKDADKPVAPADESDDKVSK</sequence>
<reference key="1">
    <citation type="journal article" date="2008" name="J. Bacteriol.">
        <title>Genome sequence of Lactobacillus helveticus: an organism distinguished by selective gene loss and IS element expansion.</title>
        <authorList>
            <person name="Callanan M."/>
            <person name="Kaleta P."/>
            <person name="O'Callaghan J."/>
            <person name="O'Sullivan O."/>
            <person name="Jordan K."/>
            <person name="McAuliffe O."/>
            <person name="Sangrador-Vegas A."/>
            <person name="Slattery L."/>
            <person name="Fitzgerald G.F."/>
            <person name="Beresford T."/>
            <person name="Ross R.P."/>
        </authorList>
    </citation>
    <scope>NUCLEOTIDE SEQUENCE [LARGE SCALE GENOMIC DNA]</scope>
    <source>
        <strain>DPC 4571</strain>
    </source>
</reference>
<organism>
    <name type="scientific">Lactobacillus helveticus (strain DPC 4571)</name>
    <dbReference type="NCBI Taxonomy" id="405566"/>
    <lineage>
        <taxon>Bacteria</taxon>
        <taxon>Bacillati</taxon>
        <taxon>Bacillota</taxon>
        <taxon>Bacilli</taxon>
        <taxon>Lactobacillales</taxon>
        <taxon>Lactobacillaceae</taxon>
        <taxon>Lactobacillus</taxon>
    </lineage>
</organism>
<accession>A8YXJ8</accession>
<proteinExistence type="inferred from homology"/>
<protein>
    <recommendedName>
        <fullName evidence="1">DNA-directed RNA polymerase subunit beta</fullName>
        <shortName evidence="1">RNAP subunit beta</shortName>
        <ecNumber evidence="1">2.7.7.6</ecNumber>
    </recommendedName>
    <alternativeName>
        <fullName evidence="1">RNA polymerase subunit beta</fullName>
    </alternativeName>
    <alternativeName>
        <fullName evidence="1">Transcriptase subunit beta</fullName>
    </alternativeName>
</protein>
<feature type="chain" id="PRO_0000329183" description="DNA-directed RNA polymerase subunit beta">
    <location>
        <begin position="1"/>
        <end position="1213"/>
    </location>
</feature>
<feature type="region of interest" description="Disordered" evidence="2">
    <location>
        <begin position="1169"/>
        <end position="1213"/>
    </location>
</feature>
<feature type="compositionally biased region" description="Basic and acidic residues" evidence="2">
    <location>
        <begin position="1171"/>
        <end position="1199"/>
    </location>
</feature>
<name>RPOB_LACH4</name>
<dbReference type="EC" id="2.7.7.6" evidence="1"/>
<dbReference type="EMBL" id="CP000517">
    <property type="protein sequence ID" value="ABX26529.1"/>
    <property type="molecule type" value="Genomic_DNA"/>
</dbReference>
<dbReference type="RefSeq" id="WP_012211372.1">
    <property type="nucleotide sequence ID" value="NC_010080.1"/>
</dbReference>
<dbReference type="SMR" id="A8YXJ8"/>
<dbReference type="KEGG" id="lhe:lhv_0302"/>
<dbReference type="eggNOG" id="COG0085">
    <property type="taxonomic scope" value="Bacteria"/>
</dbReference>
<dbReference type="HOGENOM" id="CLU_000524_4_1_9"/>
<dbReference type="Proteomes" id="UP000000790">
    <property type="component" value="Chromosome"/>
</dbReference>
<dbReference type="GO" id="GO:0000428">
    <property type="term" value="C:DNA-directed RNA polymerase complex"/>
    <property type="evidence" value="ECO:0007669"/>
    <property type="project" value="UniProtKB-KW"/>
</dbReference>
<dbReference type="GO" id="GO:0003677">
    <property type="term" value="F:DNA binding"/>
    <property type="evidence" value="ECO:0007669"/>
    <property type="project" value="UniProtKB-UniRule"/>
</dbReference>
<dbReference type="GO" id="GO:0003899">
    <property type="term" value="F:DNA-directed RNA polymerase activity"/>
    <property type="evidence" value="ECO:0007669"/>
    <property type="project" value="UniProtKB-UniRule"/>
</dbReference>
<dbReference type="GO" id="GO:0032549">
    <property type="term" value="F:ribonucleoside binding"/>
    <property type="evidence" value="ECO:0007669"/>
    <property type="project" value="InterPro"/>
</dbReference>
<dbReference type="GO" id="GO:0006351">
    <property type="term" value="P:DNA-templated transcription"/>
    <property type="evidence" value="ECO:0007669"/>
    <property type="project" value="UniProtKB-UniRule"/>
</dbReference>
<dbReference type="CDD" id="cd00653">
    <property type="entry name" value="RNA_pol_B_RPB2"/>
    <property type="match status" value="1"/>
</dbReference>
<dbReference type="FunFam" id="3.90.1800.10:FF:000001">
    <property type="entry name" value="DNA-directed RNA polymerase subunit beta"/>
    <property type="match status" value="1"/>
</dbReference>
<dbReference type="Gene3D" id="2.40.50.100">
    <property type="match status" value="1"/>
</dbReference>
<dbReference type="Gene3D" id="2.40.50.150">
    <property type="match status" value="1"/>
</dbReference>
<dbReference type="Gene3D" id="3.90.1100.10">
    <property type="match status" value="2"/>
</dbReference>
<dbReference type="Gene3D" id="2.30.150.10">
    <property type="entry name" value="DNA-directed RNA polymerase, beta subunit, external 1 domain"/>
    <property type="match status" value="1"/>
</dbReference>
<dbReference type="Gene3D" id="2.40.270.10">
    <property type="entry name" value="DNA-directed RNA polymerase, subunit 2, domain 6"/>
    <property type="match status" value="1"/>
</dbReference>
<dbReference type="Gene3D" id="3.90.1800.10">
    <property type="entry name" value="RNA polymerase alpha subunit dimerisation domain"/>
    <property type="match status" value="1"/>
</dbReference>
<dbReference type="Gene3D" id="3.90.1110.10">
    <property type="entry name" value="RNA polymerase Rpb2, domain 2"/>
    <property type="match status" value="1"/>
</dbReference>
<dbReference type="HAMAP" id="MF_01321">
    <property type="entry name" value="RNApol_bact_RpoB"/>
    <property type="match status" value="1"/>
</dbReference>
<dbReference type="InterPro" id="IPR042107">
    <property type="entry name" value="DNA-dir_RNA_pol_bsu_ext_1_sf"/>
</dbReference>
<dbReference type="InterPro" id="IPR019462">
    <property type="entry name" value="DNA-dir_RNA_pol_bsu_external_1"/>
</dbReference>
<dbReference type="InterPro" id="IPR015712">
    <property type="entry name" value="DNA-dir_RNA_pol_su2"/>
</dbReference>
<dbReference type="InterPro" id="IPR007120">
    <property type="entry name" value="DNA-dir_RNAP_su2_dom"/>
</dbReference>
<dbReference type="InterPro" id="IPR037033">
    <property type="entry name" value="DNA-dir_RNAP_su2_hyb_sf"/>
</dbReference>
<dbReference type="InterPro" id="IPR010243">
    <property type="entry name" value="RNA_pol_bsu_bac"/>
</dbReference>
<dbReference type="InterPro" id="IPR007121">
    <property type="entry name" value="RNA_pol_bsu_CS"/>
</dbReference>
<dbReference type="InterPro" id="IPR007644">
    <property type="entry name" value="RNA_pol_bsu_protrusion"/>
</dbReference>
<dbReference type="InterPro" id="IPR007642">
    <property type="entry name" value="RNA_pol_Rpb2_2"/>
</dbReference>
<dbReference type="InterPro" id="IPR037034">
    <property type="entry name" value="RNA_pol_Rpb2_2_sf"/>
</dbReference>
<dbReference type="InterPro" id="IPR007645">
    <property type="entry name" value="RNA_pol_Rpb2_3"/>
</dbReference>
<dbReference type="InterPro" id="IPR007641">
    <property type="entry name" value="RNA_pol_Rpb2_7"/>
</dbReference>
<dbReference type="InterPro" id="IPR014724">
    <property type="entry name" value="RNA_pol_RPB2_OB-fold"/>
</dbReference>
<dbReference type="NCBIfam" id="NF001616">
    <property type="entry name" value="PRK00405.1"/>
    <property type="match status" value="1"/>
</dbReference>
<dbReference type="NCBIfam" id="TIGR02013">
    <property type="entry name" value="rpoB"/>
    <property type="match status" value="1"/>
</dbReference>
<dbReference type="PANTHER" id="PTHR20856">
    <property type="entry name" value="DNA-DIRECTED RNA POLYMERASE I SUBUNIT 2"/>
    <property type="match status" value="1"/>
</dbReference>
<dbReference type="Pfam" id="PF04563">
    <property type="entry name" value="RNA_pol_Rpb2_1"/>
    <property type="match status" value="1"/>
</dbReference>
<dbReference type="Pfam" id="PF04561">
    <property type="entry name" value="RNA_pol_Rpb2_2"/>
    <property type="match status" value="2"/>
</dbReference>
<dbReference type="Pfam" id="PF04565">
    <property type="entry name" value="RNA_pol_Rpb2_3"/>
    <property type="match status" value="1"/>
</dbReference>
<dbReference type="Pfam" id="PF10385">
    <property type="entry name" value="RNA_pol_Rpb2_45"/>
    <property type="match status" value="1"/>
</dbReference>
<dbReference type="Pfam" id="PF00562">
    <property type="entry name" value="RNA_pol_Rpb2_6"/>
    <property type="match status" value="1"/>
</dbReference>
<dbReference type="Pfam" id="PF04560">
    <property type="entry name" value="RNA_pol_Rpb2_7"/>
    <property type="match status" value="1"/>
</dbReference>
<dbReference type="SUPFAM" id="SSF64484">
    <property type="entry name" value="beta and beta-prime subunits of DNA dependent RNA-polymerase"/>
    <property type="match status" value="1"/>
</dbReference>
<dbReference type="PROSITE" id="PS01166">
    <property type="entry name" value="RNA_POL_BETA"/>
    <property type="match status" value="1"/>
</dbReference>